<evidence type="ECO:0000250" key="1"/>
<evidence type="ECO:0000255" key="2"/>
<evidence type="ECO:0007829" key="3">
    <source>
        <dbReference type="PDB" id="4ZUV"/>
    </source>
</evidence>
<organismHost>
    <name type="scientific">Equus asinus</name>
    <name type="common">Donkey</name>
    <name type="synonym">Equus africanus asinus</name>
    <dbReference type="NCBI Taxonomy" id="9793"/>
</organismHost>
<organismHost>
    <name type="scientific">Equus caballus</name>
    <name type="common">Horse</name>
    <dbReference type="NCBI Taxonomy" id="9796"/>
</organismHost>
<organism>
    <name type="scientific">Equine infectious anemia virus (strain WSU5)</name>
    <name type="common">EIAV</name>
    <dbReference type="NCBI Taxonomy" id="11671"/>
    <lineage>
        <taxon>Viruses</taxon>
        <taxon>Riboviria</taxon>
        <taxon>Pararnavirae</taxon>
        <taxon>Artverviricota</taxon>
        <taxon>Revtraviricetes</taxon>
        <taxon>Ortervirales</taxon>
        <taxon>Retroviridae</taxon>
        <taxon>Orthoretrovirinae</taxon>
        <taxon>Lentivirus</taxon>
        <taxon>Equine infectious anemia virus</taxon>
    </lineage>
</organism>
<gene>
    <name type="primary">env</name>
</gene>
<name>ENV_EIAVW</name>
<protein>
    <recommendedName>
        <fullName>Envelope glycoprotein</fullName>
    </recommendedName>
    <alternativeName>
        <fullName>Env polyprotein</fullName>
    </alternativeName>
    <component>
        <recommendedName>
            <fullName>Surface protein</fullName>
            <shortName>SU</shortName>
        </recommendedName>
        <alternativeName>
            <fullName>Glycoprotein 90</fullName>
            <shortName>gp90</shortName>
        </alternativeName>
    </component>
    <component>
        <recommendedName>
            <fullName>Transmembrane protein</fullName>
            <shortName>TM</shortName>
        </recommendedName>
        <alternativeName>
            <fullName>Glycoprotein 45</fullName>
            <shortName>gp45</shortName>
        </alternativeName>
    </component>
</protein>
<reference key="1">
    <citation type="journal article" date="1990" name="Nucleic Acids Res.">
        <title>cDNA sequence of the env gene of a pathogenic equine infectious anemia lentivirus variant.</title>
        <authorList>
            <person name="McGuire T.C."/>
            <person name="Lacy P.A."/>
            <person name="O'Rourke K."/>
        </authorList>
    </citation>
    <scope>NUCLEOTIDE SEQUENCE</scope>
</reference>
<sequence>MVSIAFYGGIPGGISTPITQQSEKSKYEENTMFQPYCYNNDSKNSMAESKEARDQEMNLKEESKEEKRRNDWWKIGMFLLCLAGTTGGILWWYEGLPQQHYIGLVAIGGRLNGSGQSNAIECWGSFPGCRPFQNYFSYETNRSMHMDNNTATLLEAYHREITFIYKSSCTDSDHCQEYQCKKVNLNSSDSSNSVRVEDVTNTAEYWGFKWLECNQTENFKTILVPENEMVNINDTDTWIPKGCNETWARVKRCPIDILYGIHPIRLCVQPPFFLVQEKGIADTSRIGNCGPTIFLGVLEDNKGVVRGDYTACNVSRLNINRKDYTGIYQVPIFYTCTFTNITSCNNEPIISVIMYETNQVQYLLCNNNNSNNYNCVVQSFGVIGQAHLELPRPNKRIRNQSFNQYNCSINNKTELETWKLVKTSGITPLPISSEANTGLIRHKRDFGISAIVAAIVAATAIAASATMSYVALTEVNKIMEVQNHTFEVENSTLNGMDLIERQIKILYAMILQTHADVQLLKERQQVEETFNLIGCIERTHVFCHTGHPWNMSWGHLNESTQWDDWVSKMEDLNQEILTTLHGARNNLAQSMITFNTPDSIAQFGKDLWSHIGNWIPGLGASIIKYIVMFLLIYLLLTSSPKILRALWKVTSGAGSSGSRYLKKKFHHKHASREDTWDQAQHNIHLAGVTGGSGDKYYKQKYSRNDWNGESEEYNRRPKSWVKSIEAFGESYISEKTKGEISQPGAAINEHKNGSGGNNPHQGSLDLEIRSEGGNIYDCCIKAQEGTLAIPCCGFPLWLFWGLVIIVGRIAGYGLRGLAVIIRICTRGLNLIFEIIRKMLDYIGRALNPGTSHVSMPQYV</sequence>
<comment type="function">
    <text evidence="1">The surface protein (SU) attaches the virus to the host cell by binding to its receptor. This interaction triggers the refolding of the transmembrane protein (TM) and is thought to activate its fusogenic potential by unmasking its fusion peptide. Fusion occurs at the host cell plasma membrane (By similarity).</text>
</comment>
<comment type="function">
    <text evidence="1">The transmembrane protein (TM) acts as a class I viral fusion protein. Under the current model, the protein has at least 3 conformational states: pre-fusion native state, pre-hairpin intermediate state, and post-fusion hairpin state. During viral and target cell membrane fusion, the coiled coil regions (heptad repeats) assume a trimer-of-hairpins structure, positioning the fusion peptide in close proximity to the C-terminal region of the ectodomain. The formation of this structure appears to drive apposition and subsequent fusion of viral and target cell membranes. Membranes fusion leads to delivery of the nucleocapsid into the cytoplasm (By similarity).</text>
</comment>
<comment type="subunit">
    <text evidence="1">The mature envelope protein (Env) consists of a trimer of SU-TM heterodimers attached by noncovalent interactions or by a labile interchain disulfide bond.</text>
</comment>
<comment type="subcellular location">
    <molecule>Transmembrane protein</molecule>
    <subcellularLocation>
        <location evidence="1">Virion membrane</location>
        <topology evidence="1">Single-pass type I membrane protein</topology>
    </subcellularLocation>
    <subcellularLocation>
        <location evidence="1">Host cell membrane</location>
        <topology evidence="1">Single-pass type I membrane protein</topology>
    </subcellularLocation>
    <text evidence="1">It is probably concentrated at the site of budding and incorporated into the virions possibly by contacts between the cytoplasmic tail of Env and the N-terminus of Gag.</text>
</comment>
<comment type="subcellular location">
    <molecule>Surface protein</molecule>
    <subcellularLocation>
        <location evidence="1">Virion membrane</location>
        <topology evidence="1">Peripheral membrane protein</topology>
    </subcellularLocation>
    <subcellularLocation>
        <location evidence="1">Host cell membrane</location>
        <topology evidence="1">Peripheral membrane protein</topology>
    </subcellularLocation>
    <text evidence="1">The surface protein is not anchored to the viral envelope, but associates with the extravirion surface through its binding to TM. It is probably concentrated at the site of budding and incorporated into the virions possibly by contacts between the cytoplasmic tail of Env and the N-terminus of Gag (By similarity).</text>
</comment>
<comment type="PTM">
    <text evidence="1">Specific enzymatic cleavages in vivo yield mature proteins. Envelope glycoproteins are synthesized as an inactive precursor that is N-glycosylated and processed likely by host cell furin or by a furin-like protease in the Golgi to yield the mature SU and TM proteins. The cleavage site between SU and TM requires the minimal sequence [KR]-X-[KR]-R (By similarity).</text>
</comment>
<feature type="propeptide" id="PRO_0000239531" evidence="1">
    <location>
        <begin position="1"/>
        <end position="6"/>
    </location>
</feature>
<feature type="chain" id="PRO_0000038714" description="Envelope glycoprotein">
    <location>
        <begin position="7"/>
        <end position="859"/>
    </location>
</feature>
<feature type="chain" id="PRO_0000038715" description="Surface protein" evidence="1">
    <location>
        <begin position="7"/>
        <end position="444"/>
    </location>
</feature>
<feature type="chain" id="PRO_0000038716" description="Transmembrane protein" evidence="1">
    <location>
        <begin position="445"/>
        <end position="859"/>
    </location>
</feature>
<feature type="topological domain" description="Extracellular" evidence="2">
    <location>
        <begin position="7"/>
        <end position="614"/>
    </location>
</feature>
<feature type="transmembrane region" description="Helical" evidence="2">
    <location>
        <begin position="615"/>
        <end position="635"/>
    </location>
</feature>
<feature type="topological domain" description="Cytoplasmic" evidence="2">
    <location>
        <begin position="636"/>
        <end position="859"/>
    </location>
</feature>
<feature type="region of interest" description="Fusion peptide" evidence="2">
    <location>
        <begin position="446"/>
        <end position="466"/>
    </location>
</feature>
<feature type="region of interest" description="Immunosuppression" evidence="1">
    <location>
        <begin position="498"/>
        <end position="513"/>
    </location>
</feature>
<feature type="coiled-coil region" evidence="2">
    <location>
        <begin position="576"/>
        <end position="624"/>
    </location>
</feature>
<feature type="coiled-coil region" evidence="2">
    <location>
        <begin position="663"/>
        <end position="699"/>
    </location>
</feature>
<feature type="site" description="Cleavage; by host" evidence="1">
    <location>
        <begin position="444"/>
        <end position="445"/>
    </location>
</feature>
<feature type="site" description="Cleavage" evidence="1">
    <location>
        <begin position="684"/>
        <end position="685"/>
    </location>
</feature>
<feature type="glycosylation site" description="N-linked (GlcNAc...) asparagine; by host" evidence="2">
    <location>
        <position position="40"/>
    </location>
</feature>
<feature type="glycosylation site" description="N-linked (GlcNAc...) asparagine; by host" evidence="2">
    <location>
        <position position="112"/>
    </location>
</feature>
<feature type="glycosylation site" description="N-linked (GlcNAc...) asparagine; by host" evidence="2">
    <location>
        <position position="141"/>
    </location>
</feature>
<feature type="glycosylation site" description="N-linked (GlcNAc...) asparagine; by host" evidence="2">
    <location>
        <position position="148"/>
    </location>
</feature>
<feature type="glycosylation site" description="N-linked (GlcNAc...) asparagine; by host" evidence="2">
    <location>
        <position position="186"/>
    </location>
</feature>
<feature type="glycosylation site" description="N-linked (GlcNAc...) asparagine; by host" evidence="2">
    <location>
        <position position="214"/>
    </location>
</feature>
<feature type="glycosylation site" description="N-linked (GlcNAc...) asparagine; by host" evidence="2">
    <location>
        <position position="233"/>
    </location>
</feature>
<feature type="glycosylation site" description="N-linked (GlcNAc...) asparagine; by host" evidence="2">
    <location>
        <position position="244"/>
    </location>
</feature>
<feature type="glycosylation site" description="N-linked (GlcNAc...) asparagine; by host" evidence="2">
    <location>
        <position position="313"/>
    </location>
</feature>
<feature type="glycosylation site" description="N-linked (GlcNAc...) asparagine; by host" evidence="2">
    <location>
        <position position="340"/>
    </location>
</feature>
<feature type="glycosylation site" description="N-linked (GlcNAc...) asparagine; by host" evidence="2">
    <location>
        <position position="368"/>
    </location>
</feature>
<feature type="glycosylation site" description="N-linked (GlcNAc...) asparagine; by host" evidence="2">
    <location>
        <position position="399"/>
    </location>
</feature>
<feature type="glycosylation site" description="N-linked (GlcNAc...) asparagine; by host" evidence="2">
    <location>
        <position position="406"/>
    </location>
</feature>
<feature type="glycosylation site" description="N-linked (GlcNAc...) asparagine; by host" evidence="2">
    <location>
        <position position="411"/>
    </location>
</feature>
<feature type="glycosylation site" description="N-linked (GlcNAc...) asparagine; by host" evidence="2">
    <location>
        <position position="483"/>
    </location>
</feature>
<feature type="glycosylation site" description="N-linked (GlcNAc...) asparagine; by host" evidence="2">
    <location>
        <position position="490"/>
    </location>
</feature>
<feature type="glycosylation site" description="N-linked (GlcNAc...) asparagine; by host" evidence="2">
    <location>
        <position position="550"/>
    </location>
</feature>
<feature type="glycosylation site" description="N-linked (GlcNAc...) asparagine; by host" evidence="2">
    <location>
        <position position="557"/>
    </location>
</feature>
<feature type="helix" evidence="3">
    <location>
        <begin position="203"/>
        <end position="205"/>
    </location>
</feature>
<keyword id="KW-0002">3D-structure</keyword>
<keyword id="KW-0165">Cleavage on pair of basic residues</keyword>
<keyword id="KW-0175">Coiled coil</keyword>
<keyword id="KW-1015">Disulfide bond</keyword>
<keyword id="KW-0325">Glycoprotein</keyword>
<keyword id="KW-1032">Host cell membrane</keyword>
<keyword id="KW-1043">Host membrane</keyword>
<keyword id="KW-0945">Host-virus interaction</keyword>
<keyword id="KW-0472">Membrane</keyword>
<keyword id="KW-0812">Transmembrane</keyword>
<keyword id="KW-1133">Transmembrane helix</keyword>
<keyword id="KW-1161">Viral attachment to host cell</keyword>
<keyword id="KW-0261">Viral envelope protein</keyword>
<keyword id="KW-0946">Virion</keyword>
<keyword id="KW-1160">Virus entry into host cell</keyword>
<accession>P16082</accession>
<proteinExistence type="evidence at protein level"/>
<dbReference type="EMBL" id="X16988">
    <property type="protein sequence ID" value="CAA34856.1"/>
    <property type="molecule type" value="Unassigned_RNA"/>
</dbReference>
<dbReference type="PIR" id="S07589">
    <property type="entry name" value="VCLJWS"/>
</dbReference>
<dbReference type="PDB" id="4ZUV">
    <property type="method" value="X-ray"/>
    <property type="resolution" value="2.30 A"/>
    <property type="chains" value="C/F=195-206"/>
</dbReference>
<dbReference type="PDB" id="6LF8">
    <property type="method" value="X-ray"/>
    <property type="resolution" value="2.50 A"/>
    <property type="chains" value="C=195-206"/>
</dbReference>
<dbReference type="PDB" id="6LF9">
    <property type="method" value="X-ray"/>
    <property type="resolution" value="2.50 A"/>
    <property type="chains" value="C/F/I/L=195-206"/>
</dbReference>
<dbReference type="PDBsum" id="4ZUV"/>
<dbReference type="PDBsum" id="6LF8"/>
<dbReference type="PDBsum" id="6LF9"/>
<dbReference type="SMR" id="P16082"/>
<dbReference type="GlyCosmos" id="P16082">
    <property type="glycosylation" value="18 sites, No reported glycans"/>
</dbReference>
<dbReference type="GO" id="GO:0020002">
    <property type="term" value="C:host cell plasma membrane"/>
    <property type="evidence" value="ECO:0007669"/>
    <property type="project" value="UniProtKB-SubCell"/>
</dbReference>
<dbReference type="GO" id="GO:0016020">
    <property type="term" value="C:membrane"/>
    <property type="evidence" value="ECO:0007669"/>
    <property type="project" value="UniProtKB-KW"/>
</dbReference>
<dbReference type="GO" id="GO:0019031">
    <property type="term" value="C:viral envelope"/>
    <property type="evidence" value="ECO:0007669"/>
    <property type="project" value="UniProtKB-KW"/>
</dbReference>
<dbReference type="GO" id="GO:0055036">
    <property type="term" value="C:virion membrane"/>
    <property type="evidence" value="ECO:0007669"/>
    <property type="project" value="UniProtKB-SubCell"/>
</dbReference>
<dbReference type="GO" id="GO:0005198">
    <property type="term" value="F:structural molecule activity"/>
    <property type="evidence" value="ECO:0007669"/>
    <property type="project" value="InterPro"/>
</dbReference>
<dbReference type="GO" id="GO:0046718">
    <property type="term" value="P:symbiont entry into host cell"/>
    <property type="evidence" value="ECO:0007669"/>
    <property type="project" value="UniProtKB-KW"/>
</dbReference>
<dbReference type="GO" id="GO:0019062">
    <property type="term" value="P:virion attachment to host cell"/>
    <property type="evidence" value="ECO:0007669"/>
    <property type="project" value="UniProtKB-KW"/>
</dbReference>
<dbReference type="CDD" id="cd09909">
    <property type="entry name" value="HIV-1-like_HR1-HR2"/>
    <property type="match status" value="1"/>
</dbReference>
<dbReference type="InterPro" id="IPR000328">
    <property type="entry name" value="GP41-like"/>
</dbReference>
<dbReference type="InterPro" id="IPR001361">
    <property type="entry name" value="Gp90_EIAV"/>
</dbReference>
<dbReference type="Pfam" id="PF00971">
    <property type="entry name" value="EIAV_GP90"/>
    <property type="match status" value="1"/>
</dbReference>
<dbReference type="Pfam" id="PF00517">
    <property type="entry name" value="GP41"/>
    <property type="match status" value="1"/>
</dbReference>